<protein>
    <recommendedName>
        <fullName evidence="1">Glycine--tRNA ligase alpha subunit</fullName>
        <ecNumber evidence="1">6.1.1.14</ecNumber>
    </recommendedName>
    <alternativeName>
        <fullName evidence="1">Glycyl-tRNA synthetase alpha subunit</fullName>
        <shortName evidence="1">GlyRS</shortName>
    </alternativeName>
</protein>
<proteinExistence type="inferred from homology"/>
<accession>Q2KX74</accession>
<keyword id="KW-0030">Aminoacyl-tRNA synthetase</keyword>
<keyword id="KW-0067">ATP-binding</keyword>
<keyword id="KW-0963">Cytoplasm</keyword>
<keyword id="KW-0436">Ligase</keyword>
<keyword id="KW-0547">Nucleotide-binding</keyword>
<keyword id="KW-0648">Protein biosynthesis</keyword>
<keyword id="KW-1185">Reference proteome</keyword>
<feature type="chain" id="PRO_1000047400" description="Glycine--tRNA ligase alpha subunit">
    <location>
        <begin position="1"/>
        <end position="301"/>
    </location>
</feature>
<reference key="1">
    <citation type="journal article" date="2006" name="J. Bacteriol.">
        <title>Comparison of the genome sequence of the poultry pathogen Bordetella avium with those of B. bronchiseptica, B. pertussis, and B. parapertussis reveals extensive diversity in surface structures associated with host interaction.</title>
        <authorList>
            <person name="Sebaihia M."/>
            <person name="Preston A."/>
            <person name="Maskell D.J."/>
            <person name="Kuzmiak H."/>
            <person name="Connell T.D."/>
            <person name="King N.D."/>
            <person name="Orndorff P.E."/>
            <person name="Miyamoto D.M."/>
            <person name="Thomson N.R."/>
            <person name="Harris D."/>
            <person name="Goble A."/>
            <person name="Lord A."/>
            <person name="Murphy L."/>
            <person name="Quail M.A."/>
            <person name="Rutter S."/>
            <person name="Squares R."/>
            <person name="Squares S."/>
            <person name="Woodward J."/>
            <person name="Parkhill J."/>
            <person name="Temple L.M."/>
        </authorList>
    </citation>
    <scope>NUCLEOTIDE SEQUENCE [LARGE SCALE GENOMIC DNA]</scope>
    <source>
        <strain>197N</strain>
    </source>
</reference>
<gene>
    <name evidence="1" type="primary">glyQ</name>
    <name type="ordered locus">BAV0709</name>
</gene>
<comment type="catalytic activity">
    <reaction evidence="1">
        <text>tRNA(Gly) + glycine + ATP = glycyl-tRNA(Gly) + AMP + diphosphate</text>
        <dbReference type="Rhea" id="RHEA:16013"/>
        <dbReference type="Rhea" id="RHEA-COMP:9664"/>
        <dbReference type="Rhea" id="RHEA-COMP:9683"/>
        <dbReference type="ChEBI" id="CHEBI:30616"/>
        <dbReference type="ChEBI" id="CHEBI:33019"/>
        <dbReference type="ChEBI" id="CHEBI:57305"/>
        <dbReference type="ChEBI" id="CHEBI:78442"/>
        <dbReference type="ChEBI" id="CHEBI:78522"/>
        <dbReference type="ChEBI" id="CHEBI:456215"/>
        <dbReference type="EC" id="6.1.1.14"/>
    </reaction>
</comment>
<comment type="subunit">
    <text evidence="1">Tetramer of two alpha and two beta subunits.</text>
</comment>
<comment type="subcellular location">
    <subcellularLocation>
        <location evidence="1">Cytoplasm</location>
    </subcellularLocation>
</comment>
<comment type="similarity">
    <text evidence="1">Belongs to the class-II aminoacyl-tRNA synthetase family.</text>
</comment>
<evidence type="ECO:0000255" key="1">
    <source>
        <dbReference type="HAMAP-Rule" id="MF_00254"/>
    </source>
</evidence>
<organism>
    <name type="scientific">Bordetella avium (strain 197N)</name>
    <dbReference type="NCBI Taxonomy" id="360910"/>
    <lineage>
        <taxon>Bacteria</taxon>
        <taxon>Pseudomonadati</taxon>
        <taxon>Pseudomonadota</taxon>
        <taxon>Betaproteobacteria</taxon>
        <taxon>Burkholderiales</taxon>
        <taxon>Alcaligenaceae</taxon>
        <taxon>Bordetella</taxon>
    </lineage>
</organism>
<name>SYGA_BORA1</name>
<dbReference type="EC" id="6.1.1.14" evidence="1"/>
<dbReference type="EMBL" id="AM167904">
    <property type="protein sequence ID" value="CAJ48315.1"/>
    <property type="molecule type" value="Genomic_DNA"/>
</dbReference>
<dbReference type="RefSeq" id="WP_012416405.1">
    <property type="nucleotide sequence ID" value="NC_010645.1"/>
</dbReference>
<dbReference type="SMR" id="Q2KX74"/>
<dbReference type="STRING" id="360910.BAV0709"/>
<dbReference type="GeneID" id="92936109"/>
<dbReference type="KEGG" id="bav:BAV0709"/>
<dbReference type="eggNOG" id="COG0752">
    <property type="taxonomic scope" value="Bacteria"/>
</dbReference>
<dbReference type="HOGENOM" id="CLU_057066_1_0_4"/>
<dbReference type="OrthoDB" id="9802183at2"/>
<dbReference type="Proteomes" id="UP000001977">
    <property type="component" value="Chromosome"/>
</dbReference>
<dbReference type="GO" id="GO:0005829">
    <property type="term" value="C:cytosol"/>
    <property type="evidence" value="ECO:0007669"/>
    <property type="project" value="TreeGrafter"/>
</dbReference>
<dbReference type="GO" id="GO:0005524">
    <property type="term" value="F:ATP binding"/>
    <property type="evidence" value="ECO:0007669"/>
    <property type="project" value="UniProtKB-UniRule"/>
</dbReference>
<dbReference type="GO" id="GO:0004820">
    <property type="term" value="F:glycine-tRNA ligase activity"/>
    <property type="evidence" value="ECO:0007669"/>
    <property type="project" value="UniProtKB-UniRule"/>
</dbReference>
<dbReference type="GO" id="GO:0006426">
    <property type="term" value="P:glycyl-tRNA aminoacylation"/>
    <property type="evidence" value="ECO:0007669"/>
    <property type="project" value="UniProtKB-UniRule"/>
</dbReference>
<dbReference type="CDD" id="cd00733">
    <property type="entry name" value="GlyRS_alpha_core"/>
    <property type="match status" value="1"/>
</dbReference>
<dbReference type="FunFam" id="3.30.930.10:FF:000006">
    <property type="entry name" value="Glycine--tRNA ligase alpha subunit"/>
    <property type="match status" value="1"/>
</dbReference>
<dbReference type="Gene3D" id="3.30.930.10">
    <property type="entry name" value="Bira Bifunctional Protein, Domain 2"/>
    <property type="match status" value="1"/>
</dbReference>
<dbReference type="Gene3D" id="1.20.58.180">
    <property type="entry name" value="Class II aaRS and biotin synthetases, domain 2"/>
    <property type="match status" value="1"/>
</dbReference>
<dbReference type="HAMAP" id="MF_00254">
    <property type="entry name" value="Gly_tRNA_synth_alpha"/>
    <property type="match status" value="1"/>
</dbReference>
<dbReference type="InterPro" id="IPR045864">
    <property type="entry name" value="aa-tRNA-synth_II/BPL/LPL"/>
</dbReference>
<dbReference type="InterPro" id="IPR006194">
    <property type="entry name" value="Gly-tRNA-synth_heterodimer"/>
</dbReference>
<dbReference type="InterPro" id="IPR002310">
    <property type="entry name" value="Gly-tRNA_ligase_asu"/>
</dbReference>
<dbReference type="NCBIfam" id="TIGR00388">
    <property type="entry name" value="glyQ"/>
    <property type="match status" value="1"/>
</dbReference>
<dbReference type="NCBIfam" id="NF006827">
    <property type="entry name" value="PRK09348.1"/>
    <property type="match status" value="1"/>
</dbReference>
<dbReference type="PANTHER" id="PTHR30075:SF2">
    <property type="entry name" value="GLYCINE--TRNA LIGASE, CHLOROPLASTIC_MITOCHONDRIAL 2"/>
    <property type="match status" value="1"/>
</dbReference>
<dbReference type="PANTHER" id="PTHR30075">
    <property type="entry name" value="GLYCYL-TRNA SYNTHETASE"/>
    <property type="match status" value="1"/>
</dbReference>
<dbReference type="Pfam" id="PF02091">
    <property type="entry name" value="tRNA-synt_2e"/>
    <property type="match status" value="1"/>
</dbReference>
<dbReference type="PRINTS" id="PR01044">
    <property type="entry name" value="TRNASYNTHGA"/>
</dbReference>
<dbReference type="SUPFAM" id="SSF55681">
    <property type="entry name" value="Class II aaRS and biotin synthetases"/>
    <property type="match status" value="1"/>
</dbReference>
<dbReference type="PROSITE" id="PS50861">
    <property type="entry name" value="AA_TRNA_LIGASE_II_GLYAB"/>
    <property type="match status" value="1"/>
</dbReference>
<sequence>MLTFQQIILTLQEYWDKQGCALLQPYDMEVGAGTSHTATFLRAIGPEPWRAAYVQPSRRPKDGRYGENPNRLQHYYQYQVVLKPAPPEILDLYIGSLKALGIDPAQHDIRFVEDDWENPTLGAWGLGWEVWLNGMEVTQFTYFQQVGGLDCTPTTGEITYGLERLAMYLQNVESVYDLVWTEGANGQRVLYRDVFHQNEVEQSTYNFEHSSAEMLFAHFNDYEAEAKRLMEVPLALPAYEAALKAAHTFNMLDARGAISVTERAAYIGRIRNLSRAVAQAYYDSRERLGFPMLRNKAGEAA</sequence>